<sequence length="484" mass="54569">MYDDSYVPGFEDSEAGSADSYTSRPSLDSDVSLEEDRESARREVESQAQQQLERAKHKPVAFAVRTNVSYCGVLDEECPVQGSGVNFEAKDFLHIKEKYSNDWWIGRLVKEGGDIAFIPSPQRLESIRLKQEQKARRSGNPSSLSDIGSRRSPPPSLAKQKQKQAEHIPPYDVVPSMRPVVLVGPSLKGYEVTDMMQKALFDFLKHRFDGRISITRVTADLSLAKRSVLNNPGKRTIIERSSARSSIAEVQSEIERIFELAKSLQLVVLDADTINHPAQLAKTSLAPIIVFVKVSSPKVLQRLIRSRGKSQMKHLTVQMMAYDKLVQCPPESFDVILDENQLEDACEHLAEYLEVYWRATHHPAPGPGLLGPPSAIPGLQNQQLLGERGEEHSPLERDSLMPSDEASESSRQAWTGSSQRSSRHLEEDYADAYHDLYQPHRQHTSGLPSANGHDPQDRLLAQDSEHNHNERNWQRNRPWPKDSY</sequence>
<name>CACB3_BOVIN</name>
<accession>Q9MZL3</accession>
<accession>Q08DF1</accession>
<proteinExistence type="evidence at transcript level"/>
<evidence type="ECO:0000250" key="1">
    <source>
        <dbReference type="UniProtKB" id="P54284"/>
    </source>
</evidence>
<evidence type="ECO:0000250" key="2">
    <source>
        <dbReference type="UniProtKB" id="P54285"/>
    </source>
</evidence>
<evidence type="ECO:0000250" key="3">
    <source>
        <dbReference type="UniProtKB" id="P54287"/>
    </source>
</evidence>
<evidence type="ECO:0000255" key="4">
    <source>
        <dbReference type="PROSITE-ProRule" id="PRU00192"/>
    </source>
</evidence>
<evidence type="ECO:0000256" key="5">
    <source>
        <dbReference type="SAM" id="MobiDB-lite"/>
    </source>
</evidence>
<evidence type="ECO:0000269" key="6">
    <source>
    </source>
</evidence>
<evidence type="ECO:0000305" key="7"/>
<gene>
    <name type="primary">CACNB3</name>
</gene>
<organism>
    <name type="scientific">Bos taurus</name>
    <name type="common">Bovine</name>
    <dbReference type="NCBI Taxonomy" id="9913"/>
    <lineage>
        <taxon>Eukaryota</taxon>
        <taxon>Metazoa</taxon>
        <taxon>Chordata</taxon>
        <taxon>Craniata</taxon>
        <taxon>Vertebrata</taxon>
        <taxon>Euteleostomi</taxon>
        <taxon>Mammalia</taxon>
        <taxon>Eutheria</taxon>
        <taxon>Laurasiatheria</taxon>
        <taxon>Artiodactyla</taxon>
        <taxon>Ruminantia</taxon>
        <taxon>Pecora</taxon>
        <taxon>Bovidae</taxon>
        <taxon>Bovinae</taxon>
        <taxon>Bos</taxon>
    </lineage>
</organism>
<keyword id="KW-0106">Calcium</keyword>
<keyword id="KW-0107">Calcium channel</keyword>
<keyword id="KW-0109">Calcium transport</keyword>
<keyword id="KW-0963">Cytoplasm</keyword>
<keyword id="KW-0407">Ion channel</keyword>
<keyword id="KW-0406">Ion transport</keyword>
<keyword id="KW-0597">Phosphoprotein</keyword>
<keyword id="KW-1185">Reference proteome</keyword>
<keyword id="KW-0728">SH3 domain</keyword>
<keyword id="KW-0813">Transport</keyword>
<keyword id="KW-0851">Voltage-gated channel</keyword>
<protein>
    <recommendedName>
        <fullName>Voltage-dependent L-type calcium channel subunit beta-3</fullName>
        <shortName>CAB3</shortName>
    </recommendedName>
    <alternativeName>
        <fullName>Calcium channel voltage-dependent subunit beta 3</fullName>
    </alternativeName>
</protein>
<comment type="function">
    <text evidence="3 6">Regulatory subunit of the voltage-gated calcium channel that gives rise to L-type calcium currents (PubMed:10684870). Increases CACNA1B peak calcium current and shifts the voltage dependencies of channel activation and inactivation (PubMed:10684870). Increases CACNA1C peak calcium current and shifts the voltage dependencies of channel activation and inactivation (By similarity).</text>
</comment>
<comment type="subunit">
    <text evidence="1 3">Component of a calcium channel complex consisting of a pore-forming alpha subunit (CACNA1C) and the ancillary subunits CACNB3 and CACNA2D1. The channel complex contains alpha, beta, gamma and delta subunits in a 1:1:1:1 ratio. Interacts with CACNA2D4. Interacts with FASLG (By similarity). Interacts with CBARP; prevents the interaction of CACNB3 with the alpha subunit CACNA1C thereby negatively regulating the activity of the corresponding calcium channel (By similarity).</text>
</comment>
<comment type="subcellular location">
    <subcellularLocation>
        <location evidence="2">Cytoplasm</location>
    </subcellularLocation>
</comment>
<comment type="similarity">
    <text evidence="7">Belongs to the calcium channel beta subunit family.</text>
</comment>
<dbReference type="EMBL" id="AF174419">
    <property type="protein sequence ID" value="AAF26683.1"/>
    <property type="molecule type" value="mRNA"/>
</dbReference>
<dbReference type="EMBL" id="BC123784">
    <property type="protein sequence ID" value="AAI23785.1"/>
    <property type="molecule type" value="mRNA"/>
</dbReference>
<dbReference type="RefSeq" id="NP_776934.1">
    <property type="nucleotide sequence ID" value="NM_174509.3"/>
</dbReference>
<dbReference type="SMR" id="Q9MZL3"/>
<dbReference type="FunCoup" id="Q9MZL3">
    <property type="interactions" value="1576"/>
</dbReference>
<dbReference type="STRING" id="9913.ENSBTAP00000062215"/>
<dbReference type="PaxDb" id="9913-ENSBTAP00000029069"/>
<dbReference type="GeneID" id="282160"/>
<dbReference type="KEGG" id="bta:282160"/>
<dbReference type="CTD" id="784"/>
<dbReference type="eggNOG" id="KOG3812">
    <property type="taxonomic scope" value="Eukaryota"/>
</dbReference>
<dbReference type="HOGENOM" id="CLU_021995_0_1_1"/>
<dbReference type="InParanoid" id="Q9MZL3"/>
<dbReference type="OrthoDB" id="5962384at2759"/>
<dbReference type="TreeFam" id="TF316195"/>
<dbReference type="Proteomes" id="UP000009136">
    <property type="component" value="Unplaced"/>
</dbReference>
<dbReference type="GO" id="GO:0005737">
    <property type="term" value="C:cytoplasm"/>
    <property type="evidence" value="ECO:0007669"/>
    <property type="project" value="UniProtKB-SubCell"/>
</dbReference>
<dbReference type="GO" id="GO:1990454">
    <property type="term" value="C:L-type voltage-gated calcium channel complex"/>
    <property type="evidence" value="ECO:0000250"/>
    <property type="project" value="UniProtKB"/>
</dbReference>
<dbReference type="GO" id="GO:0045202">
    <property type="term" value="C:synapse"/>
    <property type="evidence" value="ECO:0007669"/>
    <property type="project" value="GOC"/>
</dbReference>
<dbReference type="GO" id="GO:0005246">
    <property type="term" value="F:calcium channel regulator activity"/>
    <property type="evidence" value="ECO:0000250"/>
    <property type="project" value="UniProtKB"/>
</dbReference>
<dbReference type="GO" id="GO:0008331">
    <property type="term" value="F:high voltage-gated calcium channel activity"/>
    <property type="evidence" value="ECO:0000318"/>
    <property type="project" value="GO_Central"/>
</dbReference>
<dbReference type="GO" id="GO:0061577">
    <property type="term" value="P:calcium ion transmembrane transport via high voltage-gated calcium channel"/>
    <property type="evidence" value="ECO:0000250"/>
    <property type="project" value="UniProtKB"/>
</dbReference>
<dbReference type="GO" id="GO:0006816">
    <property type="term" value="P:calcium ion transport"/>
    <property type="evidence" value="ECO:0000318"/>
    <property type="project" value="GO_Central"/>
</dbReference>
<dbReference type="GO" id="GO:0007268">
    <property type="term" value="P:chemical synaptic transmission"/>
    <property type="evidence" value="ECO:0000318"/>
    <property type="project" value="GO_Central"/>
</dbReference>
<dbReference type="GO" id="GO:1901843">
    <property type="term" value="P:positive regulation of high voltage-gated calcium channel activity"/>
    <property type="evidence" value="ECO:0000250"/>
    <property type="project" value="UniProtKB"/>
</dbReference>
<dbReference type="CDD" id="cd12042">
    <property type="entry name" value="SH3_CACNB3"/>
    <property type="match status" value="1"/>
</dbReference>
<dbReference type="FunFam" id="3.40.50.300:FF:000023">
    <property type="entry name" value="Voltage-dependent L-type calcium channel subunit beta-2"/>
    <property type="match status" value="1"/>
</dbReference>
<dbReference type="FunFam" id="2.30.30.40:FF:000049">
    <property type="entry name" value="Voltage-dependent L-type calcium channel subunit beta-3"/>
    <property type="match status" value="1"/>
</dbReference>
<dbReference type="Gene3D" id="3.40.50.300">
    <property type="entry name" value="P-loop containing nucleotide triphosphate hydrolases"/>
    <property type="match status" value="1"/>
</dbReference>
<dbReference type="Gene3D" id="2.30.30.40">
    <property type="entry name" value="SH3 Domains"/>
    <property type="match status" value="1"/>
</dbReference>
<dbReference type="InterPro" id="IPR046937">
    <property type="entry name" value="CAB1-4_N_A-dom"/>
</dbReference>
<dbReference type="InterPro" id="IPR035760">
    <property type="entry name" value="CACNB3_SH3"/>
</dbReference>
<dbReference type="InterPro" id="IPR008145">
    <property type="entry name" value="GK/Ca_channel_bsu"/>
</dbReference>
<dbReference type="InterPro" id="IPR027417">
    <property type="entry name" value="P-loop_NTPase"/>
</dbReference>
<dbReference type="InterPro" id="IPR036028">
    <property type="entry name" value="SH3-like_dom_sf"/>
</dbReference>
<dbReference type="InterPro" id="IPR001452">
    <property type="entry name" value="SH3_domain"/>
</dbReference>
<dbReference type="InterPro" id="IPR008079">
    <property type="entry name" value="VDCC_L_b3su"/>
</dbReference>
<dbReference type="InterPro" id="IPR000584">
    <property type="entry name" value="VDCC_L_bsu"/>
</dbReference>
<dbReference type="PANTHER" id="PTHR11824">
    <property type="entry name" value="VOLTAGE-DEPENDENT CALCIUM CHANNEL BETA SUBUNIT"/>
    <property type="match status" value="1"/>
</dbReference>
<dbReference type="Pfam" id="PF00625">
    <property type="entry name" value="Guanylate_kin"/>
    <property type="match status" value="1"/>
</dbReference>
<dbReference type="Pfam" id="PF12052">
    <property type="entry name" value="VGCC_beta4Aa_N"/>
    <property type="match status" value="1"/>
</dbReference>
<dbReference type="PRINTS" id="PR01626">
    <property type="entry name" value="LCACHANNELB"/>
</dbReference>
<dbReference type="PRINTS" id="PR01696">
    <property type="entry name" value="LCACHANNELB3"/>
</dbReference>
<dbReference type="SMART" id="SM00072">
    <property type="entry name" value="GuKc"/>
    <property type="match status" value="1"/>
</dbReference>
<dbReference type="SUPFAM" id="SSF52540">
    <property type="entry name" value="P-loop containing nucleoside triphosphate hydrolases"/>
    <property type="match status" value="1"/>
</dbReference>
<dbReference type="SUPFAM" id="SSF50044">
    <property type="entry name" value="SH3-domain"/>
    <property type="match status" value="1"/>
</dbReference>
<dbReference type="PROSITE" id="PS50002">
    <property type="entry name" value="SH3"/>
    <property type="match status" value="1"/>
</dbReference>
<feature type="chain" id="PRO_0000144055" description="Voltage-dependent L-type calcium channel subunit beta-3">
    <location>
        <begin position="1"/>
        <end position="484"/>
    </location>
</feature>
<feature type="domain" description="SH3" evidence="4">
    <location>
        <begin position="59"/>
        <end position="128"/>
    </location>
</feature>
<feature type="region of interest" description="Disordered" evidence="5">
    <location>
        <begin position="1"/>
        <end position="52"/>
    </location>
</feature>
<feature type="region of interest" description="Disordered" evidence="5">
    <location>
        <begin position="129"/>
        <end position="170"/>
    </location>
</feature>
<feature type="region of interest" description="Mediates interaction with the alpha subunit" evidence="3">
    <location>
        <begin position="195"/>
        <end position="345"/>
    </location>
</feature>
<feature type="region of interest" description="Disordered" evidence="5">
    <location>
        <begin position="387"/>
        <end position="484"/>
    </location>
</feature>
<feature type="compositionally biased region" description="Basic and acidic residues" evidence="5">
    <location>
        <begin position="387"/>
        <end position="399"/>
    </location>
</feature>
<feature type="compositionally biased region" description="Polar residues" evidence="5">
    <location>
        <begin position="409"/>
        <end position="420"/>
    </location>
</feature>
<feature type="compositionally biased region" description="Basic and acidic residues" evidence="5">
    <location>
        <begin position="423"/>
        <end position="438"/>
    </location>
</feature>
<feature type="compositionally biased region" description="Basic and acidic residues" evidence="5">
    <location>
        <begin position="463"/>
        <end position="484"/>
    </location>
</feature>
<feature type="modified residue" description="Phosphoserine" evidence="3">
    <location>
        <position position="152"/>
    </location>
</feature>
<feature type="modified residue" description="Phosphoserine" evidence="3">
    <location>
        <position position="393"/>
    </location>
</feature>
<feature type="sequence conflict" description="In Ref. 1; AAF26683." evidence="7" ref="1">
    <original>GP</original>
    <variation>AL</variation>
    <location>
        <begin position="366"/>
        <end position="367"/>
    </location>
</feature>
<reference key="1">
    <citation type="journal article" date="2000" name="J. Neurosci.">
        <title>Coexpression of cloned alpha(1B), beta(2a), and alpha(2)/delta subunits produces non-inactivating calcium currents similar to those found in bovine chromaffin cells.</title>
        <authorList>
            <person name="Cahill A.L."/>
            <person name="Hurley J.H."/>
            <person name="Fox A.P."/>
        </authorList>
    </citation>
    <scope>NUCLEOTIDE SEQUENCE [MRNA]</scope>
    <scope>FUNCTION</scope>
</reference>
<reference key="2">
    <citation type="submission" date="2006-09" db="EMBL/GenBank/DDBJ databases">
        <authorList>
            <consortium name="NIH - Mammalian Gene Collection (MGC) project"/>
        </authorList>
    </citation>
    <scope>NUCLEOTIDE SEQUENCE [LARGE SCALE MRNA]</scope>
    <source>
        <strain>Hereford</strain>
        <tissue>Brain cortex</tissue>
    </source>
</reference>